<dbReference type="EMBL" id="BA000039">
    <property type="protein sequence ID" value="BAC07655.1"/>
    <property type="molecule type" value="Genomic_DNA"/>
</dbReference>
<dbReference type="RefSeq" id="NP_680893.1">
    <property type="nucleotide sequence ID" value="NC_004113.1"/>
</dbReference>
<dbReference type="RefSeq" id="WP_011055957.1">
    <property type="nucleotide sequence ID" value="NC_004113.1"/>
</dbReference>
<dbReference type="SMR" id="Q8DML2"/>
<dbReference type="STRING" id="197221.gene:10746680"/>
<dbReference type="EnsemblBacteria" id="BAC07655">
    <property type="protein sequence ID" value="BAC07655"/>
    <property type="gene ID" value="BAC07655"/>
</dbReference>
<dbReference type="KEGG" id="tel:tsr0102"/>
<dbReference type="PATRIC" id="fig|197221.4.peg.105"/>
<dbReference type="eggNOG" id="COG0257">
    <property type="taxonomic scope" value="Bacteria"/>
</dbReference>
<dbReference type="Proteomes" id="UP000000440">
    <property type="component" value="Chromosome"/>
</dbReference>
<dbReference type="GO" id="GO:0005737">
    <property type="term" value="C:cytoplasm"/>
    <property type="evidence" value="ECO:0007669"/>
    <property type="project" value="UniProtKB-ARBA"/>
</dbReference>
<dbReference type="GO" id="GO:1990904">
    <property type="term" value="C:ribonucleoprotein complex"/>
    <property type="evidence" value="ECO:0007669"/>
    <property type="project" value="UniProtKB-KW"/>
</dbReference>
<dbReference type="GO" id="GO:0005840">
    <property type="term" value="C:ribosome"/>
    <property type="evidence" value="ECO:0007669"/>
    <property type="project" value="UniProtKB-KW"/>
</dbReference>
<dbReference type="GO" id="GO:0003735">
    <property type="term" value="F:structural constituent of ribosome"/>
    <property type="evidence" value="ECO:0007669"/>
    <property type="project" value="InterPro"/>
</dbReference>
<dbReference type="GO" id="GO:0006412">
    <property type="term" value="P:translation"/>
    <property type="evidence" value="ECO:0007669"/>
    <property type="project" value="UniProtKB-UniRule"/>
</dbReference>
<dbReference type="HAMAP" id="MF_00251">
    <property type="entry name" value="Ribosomal_bL36"/>
    <property type="match status" value="1"/>
</dbReference>
<dbReference type="InterPro" id="IPR000473">
    <property type="entry name" value="Ribosomal_bL36"/>
</dbReference>
<dbReference type="InterPro" id="IPR035977">
    <property type="entry name" value="Ribosomal_bL36_sp"/>
</dbReference>
<dbReference type="NCBIfam" id="TIGR01022">
    <property type="entry name" value="rpmJ_bact"/>
    <property type="match status" value="1"/>
</dbReference>
<dbReference type="PANTHER" id="PTHR42888">
    <property type="entry name" value="50S RIBOSOMAL PROTEIN L36, CHLOROPLASTIC"/>
    <property type="match status" value="1"/>
</dbReference>
<dbReference type="PANTHER" id="PTHR42888:SF1">
    <property type="entry name" value="LARGE RIBOSOMAL SUBUNIT PROTEIN BL36C"/>
    <property type="match status" value="1"/>
</dbReference>
<dbReference type="Pfam" id="PF00444">
    <property type="entry name" value="Ribosomal_L36"/>
    <property type="match status" value="1"/>
</dbReference>
<dbReference type="SUPFAM" id="SSF57840">
    <property type="entry name" value="Ribosomal protein L36"/>
    <property type="match status" value="1"/>
</dbReference>
<dbReference type="PROSITE" id="PS00828">
    <property type="entry name" value="RIBOSOMAL_L36"/>
    <property type="match status" value="1"/>
</dbReference>
<name>RL36_THEVB</name>
<reference key="1">
    <citation type="journal article" date="2002" name="DNA Res.">
        <title>Complete genome structure of the thermophilic cyanobacterium Thermosynechococcus elongatus BP-1.</title>
        <authorList>
            <person name="Nakamura Y."/>
            <person name="Kaneko T."/>
            <person name="Sato S."/>
            <person name="Ikeuchi M."/>
            <person name="Katoh H."/>
            <person name="Sasamoto S."/>
            <person name="Watanabe A."/>
            <person name="Iriguchi M."/>
            <person name="Kawashima K."/>
            <person name="Kimura T."/>
            <person name="Kishida Y."/>
            <person name="Kiyokawa C."/>
            <person name="Kohara M."/>
            <person name="Matsumoto M."/>
            <person name="Matsuno A."/>
            <person name="Nakazaki N."/>
            <person name="Shimpo S."/>
            <person name="Sugimoto M."/>
            <person name="Takeuchi C."/>
            <person name="Yamada M."/>
            <person name="Tabata S."/>
        </authorList>
    </citation>
    <scope>NUCLEOTIDE SEQUENCE [LARGE SCALE GENOMIC DNA]</scope>
    <source>
        <strain>NIES-2133 / IAM M-273 / BP-1</strain>
    </source>
</reference>
<sequence>MKVRASVRRICEKCRVIRRRGRVMVICTNPKHKQRQG</sequence>
<comment type="similarity">
    <text evidence="1">Belongs to the bacterial ribosomal protein bL36 family.</text>
</comment>
<feature type="chain" id="PRO_0000126278" description="Large ribosomal subunit protein bL36">
    <location>
        <begin position="1"/>
        <end position="37"/>
    </location>
</feature>
<proteinExistence type="inferred from homology"/>
<keyword id="KW-1185">Reference proteome</keyword>
<keyword id="KW-0687">Ribonucleoprotein</keyword>
<keyword id="KW-0689">Ribosomal protein</keyword>
<accession>Q8DML2</accession>
<organism>
    <name type="scientific">Thermosynechococcus vestitus (strain NIES-2133 / IAM M-273 / BP-1)</name>
    <dbReference type="NCBI Taxonomy" id="197221"/>
    <lineage>
        <taxon>Bacteria</taxon>
        <taxon>Bacillati</taxon>
        <taxon>Cyanobacteriota</taxon>
        <taxon>Cyanophyceae</taxon>
        <taxon>Acaryochloridales</taxon>
        <taxon>Thermosynechococcaceae</taxon>
        <taxon>Thermosynechococcus</taxon>
    </lineage>
</organism>
<evidence type="ECO:0000255" key="1">
    <source>
        <dbReference type="HAMAP-Rule" id="MF_00251"/>
    </source>
</evidence>
<evidence type="ECO:0000305" key="2"/>
<protein>
    <recommendedName>
        <fullName evidence="1">Large ribosomal subunit protein bL36</fullName>
    </recommendedName>
    <alternativeName>
        <fullName evidence="2">50S ribosomal protein L36</fullName>
    </alternativeName>
</protein>
<gene>
    <name evidence="1" type="primary">rpmJ</name>
    <name type="synonym">rpl36</name>
    <name type="ordered locus">tsr0102</name>
</gene>